<name>RL32_RENSM</name>
<protein>
    <recommendedName>
        <fullName evidence="1">Large ribosomal subunit protein bL32</fullName>
    </recommendedName>
    <alternativeName>
        <fullName evidence="3">50S ribosomal protein L32</fullName>
    </alternativeName>
</protein>
<organism>
    <name type="scientific">Renibacterium salmoninarum (strain ATCC 33209 / DSM 20767 / JCM 11484 / NBRC 15589 / NCIMB 2235)</name>
    <dbReference type="NCBI Taxonomy" id="288705"/>
    <lineage>
        <taxon>Bacteria</taxon>
        <taxon>Bacillati</taxon>
        <taxon>Actinomycetota</taxon>
        <taxon>Actinomycetes</taxon>
        <taxon>Micrococcales</taxon>
        <taxon>Micrococcaceae</taxon>
        <taxon>Renibacterium</taxon>
    </lineage>
</organism>
<proteinExistence type="inferred from homology"/>
<reference key="1">
    <citation type="journal article" date="2008" name="J. Bacteriol.">
        <title>Genome sequence of the fish pathogen Renibacterium salmoninarum suggests reductive evolution away from an environmental Arthrobacter ancestor.</title>
        <authorList>
            <person name="Wiens G.D."/>
            <person name="Rockey D.D."/>
            <person name="Wu Z."/>
            <person name="Chang J."/>
            <person name="Levy R."/>
            <person name="Crane S."/>
            <person name="Chen D.S."/>
            <person name="Capri G.R."/>
            <person name="Burnett J.R."/>
            <person name="Sudheesh P.S."/>
            <person name="Schipma M.J."/>
            <person name="Burd H."/>
            <person name="Bhattacharyya A."/>
            <person name="Rhodes L.D."/>
            <person name="Kaul R."/>
            <person name="Strom M.S."/>
        </authorList>
    </citation>
    <scope>NUCLEOTIDE SEQUENCE [LARGE SCALE GENOMIC DNA]</scope>
    <source>
        <strain>ATCC 33209 / DSM 20767 / JCM 11484 / NBRC 15589 / NCIMB 2235</strain>
    </source>
</reference>
<evidence type="ECO:0000255" key="1">
    <source>
        <dbReference type="HAMAP-Rule" id="MF_00340"/>
    </source>
</evidence>
<evidence type="ECO:0000256" key="2">
    <source>
        <dbReference type="SAM" id="MobiDB-lite"/>
    </source>
</evidence>
<evidence type="ECO:0000305" key="3"/>
<keyword id="KW-1185">Reference proteome</keyword>
<keyword id="KW-0687">Ribonucleoprotein</keyword>
<keyword id="KW-0689">Ribosomal protein</keyword>
<comment type="similarity">
    <text evidence="1">Belongs to the bacterial ribosomal protein bL32 family.</text>
</comment>
<accession>A9WMY0</accession>
<feature type="chain" id="PRO_1000079340" description="Large ribosomal subunit protein bL32">
    <location>
        <begin position="1"/>
        <end position="67"/>
    </location>
</feature>
<feature type="region of interest" description="Disordered" evidence="2">
    <location>
        <begin position="1"/>
        <end position="24"/>
    </location>
</feature>
<feature type="compositionally biased region" description="Basic residues" evidence="2">
    <location>
        <begin position="1"/>
        <end position="20"/>
    </location>
</feature>
<sequence>MAVPKRKMSRSNTRARRAKWKATAPHLAKTVENGRVTYSLPHQAKVVTDSAGTALFLEYKGRKVADV</sequence>
<gene>
    <name evidence="1" type="primary">rpmF</name>
    <name type="ordered locus">RSal33209_1776</name>
</gene>
<dbReference type="EMBL" id="CP000910">
    <property type="protein sequence ID" value="ABY23511.1"/>
    <property type="molecule type" value="Genomic_DNA"/>
</dbReference>
<dbReference type="RefSeq" id="WP_012245182.1">
    <property type="nucleotide sequence ID" value="NC_010168.1"/>
</dbReference>
<dbReference type="STRING" id="288705.RSal33209_1776"/>
<dbReference type="KEGG" id="rsa:RSal33209_1776"/>
<dbReference type="eggNOG" id="COG0333">
    <property type="taxonomic scope" value="Bacteria"/>
</dbReference>
<dbReference type="HOGENOM" id="CLU_2805252_0_0_11"/>
<dbReference type="Proteomes" id="UP000002007">
    <property type="component" value="Chromosome"/>
</dbReference>
<dbReference type="GO" id="GO:0015934">
    <property type="term" value="C:large ribosomal subunit"/>
    <property type="evidence" value="ECO:0007669"/>
    <property type="project" value="InterPro"/>
</dbReference>
<dbReference type="GO" id="GO:0003735">
    <property type="term" value="F:structural constituent of ribosome"/>
    <property type="evidence" value="ECO:0007669"/>
    <property type="project" value="InterPro"/>
</dbReference>
<dbReference type="GO" id="GO:0006412">
    <property type="term" value="P:translation"/>
    <property type="evidence" value="ECO:0007669"/>
    <property type="project" value="UniProtKB-UniRule"/>
</dbReference>
<dbReference type="HAMAP" id="MF_00340">
    <property type="entry name" value="Ribosomal_bL32"/>
    <property type="match status" value="1"/>
</dbReference>
<dbReference type="InterPro" id="IPR002677">
    <property type="entry name" value="Ribosomal_bL32"/>
</dbReference>
<dbReference type="InterPro" id="IPR011332">
    <property type="entry name" value="Ribosomal_zn-bd"/>
</dbReference>
<dbReference type="NCBIfam" id="TIGR01031">
    <property type="entry name" value="rpmF_bact"/>
    <property type="match status" value="1"/>
</dbReference>
<dbReference type="Pfam" id="PF01783">
    <property type="entry name" value="Ribosomal_L32p"/>
    <property type="match status" value="1"/>
</dbReference>
<dbReference type="SUPFAM" id="SSF57829">
    <property type="entry name" value="Zn-binding ribosomal proteins"/>
    <property type="match status" value="1"/>
</dbReference>